<evidence type="ECO:0000255" key="1"/>
<evidence type="ECO:0000256" key="2">
    <source>
        <dbReference type="SAM" id="MobiDB-lite"/>
    </source>
</evidence>
<evidence type="ECO:0000269" key="3">
    <source>
    </source>
</evidence>
<evidence type="ECO:0000269" key="4">
    <source>
    </source>
</evidence>
<evidence type="ECO:0000269" key="5">
    <source>
    </source>
</evidence>
<evidence type="ECO:0000303" key="6">
    <source>
    </source>
</evidence>
<evidence type="ECO:0000305" key="7"/>
<evidence type="ECO:0000305" key="8">
    <source>
    </source>
</evidence>
<evidence type="ECO:0000312" key="9">
    <source>
        <dbReference type="HGNC" id="HGNC:23616"/>
    </source>
</evidence>
<name>S35F3_HUMAN</name>
<proteinExistence type="evidence at protein level"/>
<organism>
    <name type="scientific">Homo sapiens</name>
    <name type="common">Human</name>
    <dbReference type="NCBI Taxonomy" id="9606"/>
    <lineage>
        <taxon>Eukaryota</taxon>
        <taxon>Metazoa</taxon>
        <taxon>Chordata</taxon>
        <taxon>Craniata</taxon>
        <taxon>Vertebrata</taxon>
        <taxon>Euteleostomi</taxon>
        <taxon>Mammalia</taxon>
        <taxon>Eutheria</taxon>
        <taxon>Euarchontoglires</taxon>
        <taxon>Primates</taxon>
        <taxon>Haplorrhini</taxon>
        <taxon>Catarrhini</taxon>
        <taxon>Hominidae</taxon>
        <taxon>Homo</taxon>
    </lineage>
</organism>
<comment type="function">
    <text evidence="8">Mediates thiamine transport.</text>
</comment>
<comment type="catalytic activity">
    <reaction evidence="5">
        <text>thiamine(in) = thiamine(out)</text>
        <dbReference type="Rhea" id="RHEA:34919"/>
        <dbReference type="ChEBI" id="CHEBI:18385"/>
    </reaction>
</comment>
<comment type="subcellular location">
    <subcellularLocation>
        <location evidence="7">Membrane</location>
        <topology evidence="1">Multi-pass membrane protein</topology>
    </subcellularLocation>
</comment>
<comment type="alternative products">
    <event type="alternative splicing"/>
    <isoform>
        <id>Q8IY50-1</id>
        <name>1</name>
        <sequence type="displayed"/>
    </isoform>
    <isoform>
        <id>Q8IY50-2</id>
        <name>2</name>
        <sequence type="described" ref="VSP_028850"/>
    </isoform>
</comment>
<comment type="tissue specificity">
    <text evidence="4">Expressed at the highest levels in the adult cerebellum.</text>
</comment>
<comment type="polymorphism">
    <text evidence="5">Individuals with blood hypertension and a SLC35F3 risk allele T/T homozygosity (intronic variant rs17514104) show a significant reduction in blood thiamine content.</text>
</comment>
<comment type="similarity">
    <text evidence="7">Belongs to the SLC35F solute transporter family.</text>
</comment>
<accession>Q8IY50</accession>
<accession>Q5TDD6</accession>
<accession>Q8N9C9</accession>
<feature type="chain" id="PRO_0000307879" description="Solute carrier family 35 member F3">
    <location>
        <begin position="1"/>
        <end position="421"/>
    </location>
</feature>
<feature type="transmembrane region" description="Helical" evidence="1">
    <location>
        <begin position="66"/>
        <end position="86"/>
    </location>
</feature>
<feature type="transmembrane region" description="Helical" evidence="1">
    <location>
        <begin position="98"/>
        <end position="118"/>
    </location>
</feature>
<feature type="transmembrane region" description="Helical" evidence="1">
    <location>
        <begin position="149"/>
        <end position="169"/>
    </location>
</feature>
<feature type="transmembrane region" description="Helical" evidence="1">
    <location>
        <begin position="179"/>
        <end position="199"/>
    </location>
</feature>
<feature type="transmembrane region" description="Helical" evidence="1">
    <location>
        <begin position="208"/>
        <end position="228"/>
    </location>
</feature>
<feature type="transmembrane region" description="Helical" evidence="1">
    <location>
        <begin position="232"/>
        <end position="252"/>
    </location>
</feature>
<feature type="transmembrane region" description="Helical" evidence="1">
    <location>
        <begin position="266"/>
        <end position="286"/>
    </location>
</feature>
<feature type="transmembrane region" description="Helical" evidence="1">
    <location>
        <begin position="305"/>
        <end position="325"/>
    </location>
</feature>
<feature type="transmembrane region" description="Helical" evidence="1">
    <location>
        <begin position="326"/>
        <end position="346"/>
    </location>
</feature>
<feature type="transmembrane region" description="Helical" evidence="1">
    <location>
        <begin position="352"/>
        <end position="372"/>
    </location>
</feature>
<feature type="region of interest" description="Disordered" evidence="2">
    <location>
        <begin position="25"/>
        <end position="45"/>
    </location>
</feature>
<feature type="region of interest" description="Disordered" evidence="2">
    <location>
        <begin position="393"/>
        <end position="421"/>
    </location>
</feature>
<feature type="compositionally biased region" description="Basic residues" evidence="2">
    <location>
        <begin position="411"/>
        <end position="421"/>
    </location>
</feature>
<feature type="splice variant" id="VSP_028850" description="In isoform 2." evidence="6">
    <original>MKKHSARVAPLSACNSPVLTLTKVEG</original>
    <variation>MGIREFPSGAPRGKSIAVGMRRSPDVSPRRLSDISPQLRQLKYLVVDEAIKEDLKWSRSVEDLTSGPVGLTSIEERILRITGYYGYQPWAASCKR</variation>
    <location>
        <begin position="1"/>
        <end position="26"/>
    </location>
</feature>
<feature type="sequence variant" id="VAR_036700" description="In dbSNP:rs17853780." evidence="3">
    <original>S</original>
    <variation>C</variation>
    <location>
        <position position="231"/>
    </location>
</feature>
<reference key="1">
    <citation type="journal article" date="2004" name="Nat. Genet.">
        <title>Complete sequencing and characterization of 21,243 full-length human cDNAs.</title>
        <authorList>
            <person name="Ota T."/>
            <person name="Suzuki Y."/>
            <person name="Nishikawa T."/>
            <person name="Otsuki T."/>
            <person name="Sugiyama T."/>
            <person name="Irie R."/>
            <person name="Wakamatsu A."/>
            <person name="Hayashi K."/>
            <person name="Sato H."/>
            <person name="Nagai K."/>
            <person name="Kimura K."/>
            <person name="Makita H."/>
            <person name="Sekine M."/>
            <person name="Obayashi M."/>
            <person name="Nishi T."/>
            <person name="Shibahara T."/>
            <person name="Tanaka T."/>
            <person name="Ishii S."/>
            <person name="Yamamoto J."/>
            <person name="Saito K."/>
            <person name="Kawai Y."/>
            <person name="Isono Y."/>
            <person name="Nakamura Y."/>
            <person name="Nagahari K."/>
            <person name="Murakami K."/>
            <person name="Yasuda T."/>
            <person name="Iwayanagi T."/>
            <person name="Wagatsuma M."/>
            <person name="Shiratori A."/>
            <person name="Sudo H."/>
            <person name="Hosoiri T."/>
            <person name="Kaku Y."/>
            <person name="Kodaira H."/>
            <person name="Kondo H."/>
            <person name="Sugawara M."/>
            <person name="Takahashi M."/>
            <person name="Kanda K."/>
            <person name="Yokoi T."/>
            <person name="Furuya T."/>
            <person name="Kikkawa E."/>
            <person name="Omura Y."/>
            <person name="Abe K."/>
            <person name="Kamihara K."/>
            <person name="Katsuta N."/>
            <person name="Sato K."/>
            <person name="Tanikawa M."/>
            <person name="Yamazaki M."/>
            <person name="Ninomiya K."/>
            <person name="Ishibashi T."/>
            <person name="Yamashita H."/>
            <person name="Murakawa K."/>
            <person name="Fujimori K."/>
            <person name="Tanai H."/>
            <person name="Kimata M."/>
            <person name="Watanabe M."/>
            <person name="Hiraoka S."/>
            <person name="Chiba Y."/>
            <person name="Ishida S."/>
            <person name="Ono Y."/>
            <person name="Takiguchi S."/>
            <person name="Watanabe S."/>
            <person name="Yosida M."/>
            <person name="Hotuta T."/>
            <person name="Kusano J."/>
            <person name="Kanehori K."/>
            <person name="Takahashi-Fujii A."/>
            <person name="Hara H."/>
            <person name="Tanase T.-O."/>
            <person name="Nomura Y."/>
            <person name="Togiya S."/>
            <person name="Komai F."/>
            <person name="Hara R."/>
            <person name="Takeuchi K."/>
            <person name="Arita M."/>
            <person name="Imose N."/>
            <person name="Musashino K."/>
            <person name="Yuuki H."/>
            <person name="Oshima A."/>
            <person name="Sasaki N."/>
            <person name="Aotsuka S."/>
            <person name="Yoshikawa Y."/>
            <person name="Matsunawa H."/>
            <person name="Ichihara T."/>
            <person name="Shiohata N."/>
            <person name="Sano S."/>
            <person name="Moriya S."/>
            <person name="Momiyama H."/>
            <person name="Satoh N."/>
            <person name="Takami S."/>
            <person name="Terashima Y."/>
            <person name="Suzuki O."/>
            <person name="Nakagawa S."/>
            <person name="Senoh A."/>
            <person name="Mizoguchi H."/>
            <person name="Goto Y."/>
            <person name="Shimizu F."/>
            <person name="Wakebe H."/>
            <person name="Hishigaki H."/>
            <person name="Watanabe T."/>
            <person name="Sugiyama A."/>
            <person name="Takemoto M."/>
            <person name="Kawakami B."/>
            <person name="Yamazaki M."/>
            <person name="Watanabe K."/>
            <person name="Kumagai A."/>
            <person name="Itakura S."/>
            <person name="Fukuzumi Y."/>
            <person name="Fujimori Y."/>
            <person name="Komiyama M."/>
            <person name="Tashiro H."/>
            <person name="Tanigami A."/>
            <person name="Fujiwara T."/>
            <person name="Ono T."/>
            <person name="Yamada K."/>
            <person name="Fujii Y."/>
            <person name="Ozaki K."/>
            <person name="Hirao M."/>
            <person name="Ohmori Y."/>
            <person name="Kawabata A."/>
            <person name="Hikiji T."/>
            <person name="Kobatake N."/>
            <person name="Inagaki H."/>
            <person name="Ikema Y."/>
            <person name="Okamoto S."/>
            <person name="Okitani R."/>
            <person name="Kawakami T."/>
            <person name="Noguchi S."/>
            <person name="Itoh T."/>
            <person name="Shigeta K."/>
            <person name="Senba T."/>
            <person name="Matsumura K."/>
            <person name="Nakajima Y."/>
            <person name="Mizuno T."/>
            <person name="Morinaga M."/>
            <person name="Sasaki M."/>
            <person name="Togashi T."/>
            <person name="Oyama M."/>
            <person name="Hata H."/>
            <person name="Watanabe M."/>
            <person name="Komatsu T."/>
            <person name="Mizushima-Sugano J."/>
            <person name="Satoh T."/>
            <person name="Shirai Y."/>
            <person name="Takahashi Y."/>
            <person name="Nakagawa K."/>
            <person name="Okumura K."/>
            <person name="Nagase T."/>
            <person name="Nomura N."/>
            <person name="Kikuchi H."/>
            <person name="Masuho Y."/>
            <person name="Yamashita R."/>
            <person name="Nakai K."/>
            <person name="Yada T."/>
            <person name="Nakamura Y."/>
            <person name="Ohara O."/>
            <person name="Isogai T."/>
            <person name="Sugano S."/>
        </authorList>
    </citation>
    <scope>NUCLEOTIDE SEQUENCE [LARGE SCALE MRNA] (ISOFORM 2)</scope>
    <source>
        <tissue>Hippocampus</tissue>
    </source>
</reference>
<reference key="2">
    <citation type="journal article" date="2006" name="Nature">
        <title>The DNA sequence and biological annotation of human chromosome 1.</title>
        <authorList>
            <person name="Gregory S.G."/>
            <person name="Barlow K.F."/>
            <person name="McLay K.E."/>
            <person name="Kaul R."/>
            <person name="Swarbreck D."/>
            <person name="Dunham A."/>
            <person name="Scott C.E."/>
            <person name="Howe K.L."/>
            <person name="Woodfine K."/>
            <person name="Spencer C.C.A."/>
            <person name="Jones M.C."/>
            <person name="Gillson C."/>
            <person name="Searle S."/>
            <person name="Zhou Y."/>
            <person name="Kokocinski F."/>
            <person name="McDonald L."/>
            <person name="Evans R."/>
            <person name="Phillips K."/>
            <person name="Atkinson A."/>
            <person name="Cooper R."/>
            <person name="Jones C."/>
            <person name="Hall R.E."/>
            <person name="Andrews T.D."/>
            <person name="Lloyd C."/>
            <person name="Ainscough R."/>
            <person name="Almeida J.P."/>
            <person name="Ambrose K.D."/>
            <person name="Anderson F."/>
            <person name="Andrew R.W."/>
            <person name="Ashwell R.I.S."/>
            <person name="Aubin K."/>
            <person name="Babbage A.K."/>
            <person name="Bagguley C.L."/>
            <person name="Bailey J."/>
            <person name="Beasley H."/>
            <person name="Bethel G."/>
            <person name="Bird C.P."/>
            <person name="Bray-Allen S."/>
            <person name="Brown J.Y."/>
            <person name="Brown A.J."/>
            <person name="Buckley D."/>
            <person name="Burton J."/>
            <person name="Bye J."/>
            <person name="Carder C."/>
            <person name="Chapman J.C."/>
            <person name="Clark S.Y."/>
            <person name="Clarke G."/>
            <person name="Clee C."/>
            <person name="Cobley V."/>
            <person name="Collier R.E."/>
            <person name="Corby N."/>
            <person name="Coville G.J."/>
            <person name="Davies J."/>
            <person name="Deadman R."/>
            <person name="Dunn M."/>
            <person name="Earthrowl M."/>
            <person name="Ellington A.G."/>
            <person name="Errington H."/>
            <person name="Frankish A."/>
            <person name="Frankland J."/>
            <person name="French L."/>
            <person name="Garner P."/>
            <person name="Garnett J."/>
            <person name="Gay L."/>
            <person name="Ghori M.R.J."/>
            <person name="Gibson R."/>
            <person name="Gilby L.M."/>
            <person name="Gillett W."/>
            <person name="Glithero R.J."/>
            <person name="Grafham D.V."/>
            <person name="Griffiths C."/>
            <person name="Griffiths-Jones S."/>
            <person name="Grocock R."/>
            <person name="Hammond S."/>
            <person name="Harrison E.S.I."/>
            <person name="Hart E."/>
            <person name="Haugen E."/>
            <person name="Heath P.D."/>
            <person name="Holmes S."/>
            <person name="Holt K."/>
            <person name="Howden P.J."/>
            <person name="Hunt A.R."/>
            <person name="Hunt S.E."/>
            <person name="Hunter G."/>
            <person name="Isherwood J."/>
            <person name="James R."/>
            <person name="Johnson C."/>
            <person name="Johnson D."/>
            <person name="Joy A."/>
            <person name="Kay M."/>
            <person name="Kershaw J.K."/>
            <person name="Kibukawa M."/>
            <person name="Kimberley A.M."/>
            <person name="King A."/>
            <person name="Knights A.J."/>
            <person name="Lad H."/>
            <person name="Laird G."/>
            <person name="Lawlor S."/>
            <person name="Leongamornlert D.A."/>
            <person name="Lloyd D.M."/>
            <person name="Loveland J."/>
            <person name="Lovell J."/>
            <person name="Lush M.J."/>
            <person name="Lyne R."/>
            <person name="Martin S."/>
            <person name="Mashreghi-Mohammadi M."/>
            <person name="Matthews L."/>
            <person name="Matthews N.S.W."/>
            <person name="McLaren S."/>
            <person name="Milne S."/>
            <person name="Mistry S."/>
            <person name="Moore M.J.F."/>
            <person name="Nickerson T."/>
            <person name="O'Dell C.N."/>
            <person name="Oliver K."/>
            <person name="Palmeiri A."/>
            <person name="Palmer S.A."/>
            <person name="Parker A."/>
            <person name="Patel D."/>
            <person name="Pearce A.V."/>
            <person name="Peck A.I."/>
            <person name="Pelan S."/>
            <person name="Phelps K."/>
            <person name="Phillimore B.J."/>
            <person name="Plumb R."/>
            <person name="Rajan J."/>
            <person name="Raymond C."/>
            <person name="Rouse G."/>
            <person name="Saenphimmachak C."/>
            <person name="Sehra H.K."/>
            <person name="Sheridan E."/>
            <person name="Shownkeen R."/>
            <person name="Sims S."/>
            <person name="Skuce C.D."/>
            <person name="Smith M."/>
            <person name="Steward C."/>
            <person name="Subramanian S."/>
            <person name="Sycamore N."/>
            <person name="Tracey A."/>
            <person name="Tromans A."/>
            <person name="Van Helmond Z."/>
            <person name="Wall M."/>
            <person name="Wallis J.M."/>
            <person name="White S."/>
            <person name="Whitehead S.L."/>
            <person name="Wilkinson J.E."/>
            <person name="Willey D.L."/>
            <person name="Williams H."/>
            <person name="Wilming L."/>
            <person name="Wray P.W."/>
            <person name="Wu Z."/>
            <person name="Coulson A."/>
            <person name="Vaudin M."/>
            <person name="Sulston J.E."/>
            <person name="Durbin R.M."/>
            <person name="Hubbard T."/>
            <person name="Wooster R."/>
            <person name="Dunham I."/>
            <person name="Carter N.P."/>
            <person name="McVean G."/>
            <person name="Ross M.T."/>
            <person name="Harrow J."/>
            <person name="Olson M.V."/>
            <person name="Beck S."/>
            <person name="Rogers J."/>
            <person name="Bentley D.R."/>
        </authorList>
    </citation>
    <scope>NUCLEOTIDE SEQUENCE [LARGE SCALE GENOMIC DNA]</scope>
</reference>
<reference key="3">
    <citation type="submission" date="2005-07" db="EMBL/GenBank/DDBJ databases">
        <authorList>
            <person name="Mural R.J."/>
            <person name="Istrail S."/>
            <person name="Sutton G.G."/>
            <person name="Florea L."/>
            <person name="Halpern A.L."/>
            <person name="Mobarry C.M."/>
            <person name="Lippert R."/>
            <person name="Walenz B."/>
            <person name="Shatkay H."/>
            <person name="Dew I."/>
            <person name="Miller J.R."/>
            <person name="Flanigan M.J."/>
            <person name="Edwards N.J."/>
            <person name="Bolanos R."/>
            <person name="Fasulo D."/>
            <person name="Halldorsson B.V."/>
            <person name="Hannenhalli S."/>
            <person name="Turner R."/>
            <person name="Yooseph S."/>
            <person name="Lu F."/>
            <person name="Nusskern D.R."/>
            <person name="Shue B.C."/>
            <person name="Zheng X.H."/>
            <person name="Zhong F."/>
            <person name="Delcher A.L."/>
            <person name="Huson D.H."/>
            <person name="Kravitz S.A."/>
            <person name="Mouchard L."/>
            <person name="Reinert K."/>
            <person name="Remington K.A."/>
            <person name="Clark A.G."/>
            <person name="Waterman M.S."/>
            <person name="Eichler E.E."/>
            <person name="Adams M.D."/>
            <person name="Hunkapiller M.W."/>
            <person name="Myers E.W."/>
            <person name="Venter J.C."/>
        </authorList>
    </citation>
    <scope>NUCLEOTIDE SEQUENCE [LARGE SCALE GENOMIC DNA]</scope>
</reference>
<reference key="4">
    <citation type="journal article" date="2004" name="Genome Res.">
        <title>The status, quality, and expansion of the NIH full-length cDNA project: the Mammalian Gene Collection (MGC).</title>
        <authorList>
            <consortium name="The MGC Project Team"/>
        </authorList>
    </citation>
    <scope>NUCLEOTIDE SEQUENCE [LARGE SCALE MRNA] (ISOFORM 1)</scope>
    <scope>VARIANT CYS-231</scope>
    <source>
        <tissue>Brain</tissue>
    </source>
</reference>
<reference key="5">
    <citation type="journal article" date="2009" name="Drug Metab. Pharmacokinet.">
        <title>Tissue-specific mRNA expression profiles of human solute carrier 35 transporters.</title>
        <authorList>
            <person name="Nishimura M."/>
            <person name="Suzuki S."/>
            <person name="Satoh T."/>
            <person name="Naito S."/>
        </authorList>
    </citation>
    <scope>TISSUE SPECIFICITY</scope>
</reference>
<reference key="6">
    <citation type="journal article" date="2014" name="J. Am. Coll. Cardiol.">
        <title>Genetic implication of a novel thiamine transporter in human hypertension.</title>
        <authorList>
            <consortium name="International Consortium for Blood Pressure Genome-Wide Association Studies"/>
            <person name="Zhang K."/>
            <person name="Huentelman M.J."/>
            <person name="Rao F."/>
            <person name="Sun E.I."/>
            <person name="Corneveaux J.J."/>
            <person name="Schork A.J."/>
            <person name="Wei Z."/>
            <person name="Waalen J."/>
            <person name="Miramontes-Gonzalez J.P."/>
            <person name="Hightower C.M."/>
            <person name="Maihofer A.X."/>
            <person name="Mahata M."/>
            <person name="Pastinen T."/>
            <person name="Ehret G.B."/>
            <person name="Schork N.J."/>
            <person name="Eskin E."/>
            <person name="Nievergelt C.M."/>
            <person name="Saier M.H. Jr."/>
            <person name="O'Connor D.T."/>
        </authorList>
    </citation>
    <scope>FUNCTION</scope>
    <scope>TRANSPORTER ACTIVITY</scope>
    <scope>POLYMORPHISM</scope>
</reference>
<sequence>MKKHSARVAPLSACNSPVLTLTKVEGEERPRDSPGPAEAQAPAGVEAGGRASRRCWTCSRAQLKKIFWGVAVVLCVCSSWAGSTQLAKLTFRKFDAPFTLTWFATNWNFLFFPLYYVGHVCKSTEKQSVKQRYRECCRFFGDNGLTLKVFFTKAAPFGVLWTLTNYLYLHAIKKINTTDVSVLFCCNKAFVFLLSWIVLRDRFMGVRIVAAILAIAGIVMMTYADGFHSHSVIGIALVVASASMSALYKVLFKLLLGSAKFGEAALFLSILGVFNILFITCIPIILYFTKVEYWSSFDDIPWGNLCGFSVLLLTFNIVLNFGIAVTYPTLMSLGIVLSIPVNAVIDHYTSQIVFNGVRVIAIIIIGLGFLLLLLPEEWDVWLIKLLTRLKVRKKEEPAEGAADLSSGPQSKNRRARPSFAR</sequence>
<dbReference type="EMBL" id="AK095031">
    <property type="protein sequence ID" value="BAC04479.1"/>
    <property type="molecule type" value="mRNA"/>
</dbReference>
<dbReference type="EMBL" id="AL713868">
    <property type="status" value="NOT_ANNOTATED_CDS"/>
    <property type="molecule type" value="Genomic_DNA"/>
</dbReference>
<dbReference type="EMBL" id="AL122008">
    <property type="status" value="NOT_ANNOTATED_CDS"/>
    <property type="molecule type" value="Genomic_DNA"/>
</dbReference>
<dbReference type="EMBL" id="CH471098">
    <property type="protein sequence ID" value="EAW69991.1"/>
    <property type="molecule type" value="Genomic_DNA"/>
</dbReference>
<dbReference type="EMBL" id="BC037878">
    <property type="protein sequence ID" value="AAH37878.1"/>
    <property type="molecule type" value="mRNA"/>
</dbReference>
<dbReference type="CCDS" id="CCDS1600.1">
    <molecule id="Q8IY50-2"/>
</dbReference>
<dbReference type="CCDS" id="CCDS73050.1">
    <molecule id="Q8IY50-1"/>
</dbReference>
<dbReference type="RefSeq" id="NP_001287774.1">
    <molecule id="Q8IY50-1"/>
    <property type="nucleotide sequence ID" value="NM_001300845.2"/>
</dbReference>
<dbReference type="RefSeq" id="NP_775779.1">
    <molecule id="Q8IY50-2"/>
    <property type="nucleotide sequence ID" value="NM_173508.4"/>
</dbReference>
<dbReference type="SMR" id="Q8IY50"/>
<dbReference type="BioGRID" id="127158">
    <property type="interactions" value="4"/>
</dbReference>
<dbReference type="FunCoup" id="Q8IY50">
    <property type="interactions" value="155"/>
</dbReference>
<dbReference type="STRING" id="9606.ENSP00000355577"/>
<dbReference type="TCDB" id="2.A.7.24.8">
    <property type="family name" value="the drug/metabolite transporter (dmt) superfamily"/>
</dbReference>
<dbReference type="iPTMnet" id="Q8IY50"/>
<dbReference type="PhosphoSitePlus" id="Q8IY50"/>
<dbReference type="SwissPalm" id="Q8IY50"/>
<dbReference type="BioMuta" id="SLC35F3"/>
<dbReference type="DMDM" id="160177558"/>
<dbReference type="MassIVE" id="Q8IY50"/>
<dbReference type="PaxDb" id="9606-ENSP00000355577"/>
<dbReference type="PeptideAtlas" id="Q8IY50"/>
<dbReference type="ProteomicsDB" id="71109">
    <molecule id="Q8IY50-1"/>
</dbReference>
<dbReference type="ProteomicsDB" id="71110">
    <molecule id="Q8IY50-2"/>
</dbReference>
<dbReference type="Antibodypedia" id="34691">
    <property type="antibodies" value="43 antibodies from 16 providers"/>
</dbReference>
<dbReference type="DNASU" id="148641"/>
<dbReference type="Ensembl" id="ENST00000366617.3">
    <molecule id="Q8IY50-1"/>
    <property type="protein sequence ID" value="ENSP00000355576.3"/>
    <property type="gene ID" value="ENSG00000183780.13"/>
</dbReference>
<dbReference type="Ensembl" id="ENST00000366618.8">
    <molecule id="Q8IY50-2"/>
    <property type="protein sequence ID" value="ENSP00000355577.3"/>
    <property type="gene ID" value="ENSG00000183780.13"/>
</dbReference>
<dbReference type="GeneID" id="148641"/>
<dbReference type="KEGG" id="hsa:148641"/>
<dbReference type="MANE-Select" id="ENST00000366618.8">
    <molecule id="Q8IY50-2"/>
    <property type="protein sequence ID" value="ENSP00000355577.3"/>
    <property type="RefSeq nucleotide sequence ID" value="NM_173508.4"/>
    <property type="RefSeq protein sequence ID" value="NP_775779.1"/>
</dbReference>
<dbReference type="UCSC" id="uc001hvy.1">
    <molecule id="Q8IY50-1"/>
    <property type="organism name" value="human"/>
</dbReference>
<dbReference type="AGR" id="HGNC:23616"/>
<dbReference type="CTD" id="148641"/>
<dbReference type="DisGeNET" id="148641"/>
<dbReference type="GeneCards" id="SLC35F3"/>
<dbReference type="HGNC" id="HGNC:23616">
    <property type="gene designation" value="SLC35F3"/>
</dbReference>
<dbReference type="HPA" id="ENSG00000183780">
    <property type="expression patterns" value="Tissue enriched (brain)"/>
</dbReference>
<dbReference type="neXtProt" id="NX_Q8IY50"/>
<dbReference type="OpenTargets" id="ENSG00000183780"/>
<dbReference type="PharmGKB" id="PA134938022"/>
<dbReference type="VEuPathDB" id="HostDB:ENSG00000183780"/>
<dbReference type="eggNOG" id="KOG4314">
    <property type="taxonomic scope" value="Eukaryota"/>
</dbReference>
<dbReference type="GeneTree" id="ENSGT00390000008727"/>
<dbReference type="HOGENOM" id="CLU_022280_0_1_1"/>
<dbReference type="InParanoid" id="Q8IY50"/>
<dbReference type="OMA" id="MCKSPER"/>
<dbReference type="OrthoDB" id="10062838at2759"/>
<dbReference type="PAN-GO" id="Q8IY50">
    <property type="GO annotations" value="1 GO annotation based on evolutionary models"/>
</dbReference>
<dbReference type="PhylomeDB" id="Q8IY50"/>
<dbReference type="TreeFam" id="TF313798"/>
<dbReference type="PathwayCommons" id="Q8IY50"/>
<dbReference type="BioGRID-ORCS" id="148641">
    <property type="hits" value="8 hits in 1144 CRISPR screens"/>
</dbReference>
<dbReference type="ChiTaRS" id="SLC35F3">
    <property type="organism name" value="human"/>
</dbReference>
<dbReference type="GenomeRNAi" id="148641"/>
<dbReference type="Pharos" id="Q8IY50">
    <property type="development level" value="Tbio"/>
</dbReference>
<dbReference type="PRO" id="PR:Q8IY50"/>
<dbReference type="Proteomes" id="UP000005640">
    <property type="component" value="Chromosome 1"/>
</dbReference>
<dbReference type="RNAct" id="Q8IY50">
    <property type="molecule type" value="protein"/>
</dbReference>
<dbReference type="Bgee" id="ENSG00000183780">
    <property type="expression patterns" value="Expressed in Brodmann (1909) area 23 and 121 other cell types or tissues"/>
</dbReference>
<dbReference type="GO" id="GO:0016020">
    <property type="term" value="C:membrane"/>
    <property type="evidence" value="ECO:0007669"/>
    <property type="project" value="UniProtKB-SubCell"/>
</dbReference>
<dbReference type="GO" id="GO:0015888">
    <property type="term" value="P:thiamine transport"/>
    <property type="evidence" value="ECO:0000314"/>
    <property type="project" value="UniProtKB"/>
</dbReference>
<dbReference type="InterPro" id="IPR000620">
    <property type="entry name" value="EamA_dom"/>
</dbReference>
<dbReference type="InterPro" id="IPR026505">
    <property type="entry name" value="Solute_c_fam_35_mem_F3/F4"/>
</dbReference>
<dbReference type="PANTHER" id="PTHR19346:SF3">
    <property type="entry name" value="SOLUTE CARRIER FAMILY 35 MEMBER F3"/>
    <property type="match status" value="1"/>
</dbReference>
<dbReference type="PANTHER" id="PTHR19346">
    <property type="entry name" value="SUGAR PHOSPHATE TRANSPORTER DOMAIN-CONTAINING PROTEIN"/>
    <property type="match status" value="1"/>
</dbReference>
<dbReference type="Pfam" id="PF00892">
    <property type="entry name" value="EamA"/>
    <property type="match status" value="1"/>
</dbReference>
<dbReference type="SUPFAM" id="SSF103481">
    <property type="entry name" value="Multidrug resistance efflux transporter EmrE"/>
    <property type="match status" value="1"/>
</dbReference>
<keyword id="KW-0025">Alternative splicing</keyword>
<keyword id="KW-0472">Membrane</keyword>
<keyword id="KW-1267">Proteomics identification</keyword>
<keyword id="KW-1185">Reference proteome</keyword>
<keyword id="KW-0812">Transmembrane</keyword>
<keyword id="KW-1133">Transmembrane helix</keyword>
<keyword id="KW-0813">Transport</keyword>
<gene>
    <name evidence="9" type="primary">SLC35F3</name>
</gene>
<protein>
    <recommendedName>
        <fullName>Solute carrier family 35 member F3</fullName>
    </recommendedName>
    <alternativeName>
        <fullName evidence="7">Thiamine transporter SLC35F3</fullName>
    </alternativeName>
</protein>